<evidence type="ECO:0000255" key="1">
    <source>
        <dbReference type="HAMAP-Rule" id="MF_00206"/>
    </source>
</evidence>
<evidence type="ECO:0000255" key="2">
    <source>
        <dbReference type="PROSITE-ProRule" id="PRU01266"/>
    </source>
</evidence>
<organism>
    <name type="scientific">Caldicellulosiruptor bescii (strain ATCC BAA-1888 / DSM 6725 / KCTC 15123 / Z-1320)</name>
    <name type="common">Anaerocellum thermophilum</name>
    <dbReference type="NCBI Taxonomy" id="521460"/>
    <lineage>
        <taxon>Bacteria</taxon>
        <taxon>Bacillati</taxon>
        <taxon>Bacillota</taxon>
        <taxon>Bacillota incertae sedis</taxon>
        <taxon>Caldicellulosiruptorales</taxon>
        <taxon>Caldicellulosiruptoraceae</taxon>
        <taxon>Caldicellulosiruptor</taxon>
    </lineage>
</organism>
<protein>
    <recommendedName>
        <fullName evidence="1">Lipoyl synthase</fullName>
        <ecNumber evidence="1">2.8.1.8</ecNumber>
    </recommendedName>
    <alternativeName>
        <fullName evidence="1">Lip-syn</fullName>
        <shortName evidence="1">LS</shortName>
    </alternativeName>
    <alternativeName>
        <fullName evidence="1">Lipoate synthase</fullName>
    </alternativeName>
    <alternativeName>
        <fullName evidence="1">Lipoic acid synthase</fullName>
    </alternativeName>
    <alternativeName>
        <fullName evidence="1">Sulfur insertion protein LipA</fullName>
    </alternativeName>
</protein>
<reference key="1">
    <citation type="submission" date="2009-01" db="EMBL/GenBank/DDBJ databases">
        <title>Complete sequence of chromosome of Caldicellulosiruptor becscii DSM 6725.</title>
        <authorList>
            <person name="Lucas S."/>
            <person name="Copeland A."/>
            <person name="Lapidus A."/>
            <person name="Glavina del Rio T."/>
            <person name="Tice H."/>
            <person name="Bruce D."/>
            <person name="Goodwin L."/>
            <person name="Pitluck S."/>
            <person name="Sims D."/>
            <person name="Meincke L."/>
            <person name="Brettin T."/>
            <person name="Detter J.C."/>
            <person name="Han C."/>
            <person name="Larimer F."/>
            <person name="Land M."/>
            <person name="Hauser L."/>
            <person name="Kyrpides N."/>
            <person name="Ovchinnikova G."/>
            <person name="Kataeva I."/>
            <person name="Adams M.W.W."/>
        </authorList>
    </citation>
    <scope>NUCLEOTIDE SEQUENCE [LARGE SCALE GENOMIC DNA]</scope>
    <source>
        <strain>ATCC BAA-1888 / DSM 6725 / KCTC 15123 / Z-1320</strain>
    </source>
</reference>
<comment type="function">
    <text evidence="1">Catalyzes the radical-mediated insertion of two sulfur atoms into the C-6 and C-8 positions of the octanoyl moiety bound to the lipoyl domains of lipoate-dependent enzymes, thereby converting the octanoylated domains into lipoylated derivatives.</text>
</comment>
<comment type="catalytic activity">
    <reaction evidence="1">
        <text>[[Fe-S] cluster scaffold protein carrying a second [4Fe-4S](2+) cluster] + N(6)-octanoyl-L-lysyl-[protein] + 2 oxidized [2Fe-2S]-[ferredoxin] + 2 S-adenosyl-L-methionine + 4 H(+) = [[Fe-S] cluster scaffold protein] + N(6)-[(R)-dihydrolipoyl]-L-lysyl-[protein] + 4 Fe(3+) + 2 hydrogen sulfide + 2 5'-deoxyadenosine + 2 L-methionine + 2 reduced [2Fe-2S]-[ferredoxin]</text>
        <dbReference type="Rhea" id="RHEA:16585"/>
        <dbReference type="Rhea" id="RHEA-COMP:9928"/>
        <dbReference type="Rhea" id="RHEA-COMP:10000"/>
        <dbReference type="Rhea" id="RHEA-COMP:10001"/>
        <dbReference type="Rhea" id="RHEA-COMP:10475"/>
        <dbReference type="Rhea" id="RHEA-COMP:14568"/>
        <dbReference type="Rhea" id="RHEA-COMP:14569"/>
        <dbReference type="ChEBI" id="CHEBI:15378"/>
        <dbReference type="ChEBI" id="CHEBI:17319"/>
        <dbReference type="ChEBI" id="CHEBI:29034"/>
        <dbReference type="ChEBI" id="CHEBI:29919"/>
        <dbReference type="ChEBI" id="CHEBI:33722"/>
        <dbReference type="ChEBI" id="CHEBI:33737"/>
        <dbReference type="ChEBI" id="CHEBI:33738"/>
        <dbReference type="ChEBI" id="CHEBI:57844"/>
        <dbReference type="ChEBI" id="CHEBI:59789"/>
        <dbReference type="ChEBI" id="CHEBI:78809"/>
        <dbReference type="ChEBI" id="CHEBI:83100"/>
        <dbReference type="EC" id="2.8.1.8"/>
    </reaction>
</comment>
<comment type="cofactor">
    <cofactor evidence="1">
        <name>[4Fe-4S] cluster</name>
        <dbReference type="ChEBI" id="CHEBI:49883"/>
    </cofactor>
    <text evidence="1">Binds 2 [4Fe-4S] clusters per subunit. One cluster is coordinated with 3 cysteines and an exchangeable S-adenosyl-L-methionine.</text>
</comment>
<comment type="pathway">
    <text evidence="1">Protein modification; protein lipoylation via endogenous pathway; protein N(6)-(lipoyl)lysine from octanoyl-[acyl-carrier-protein]: step 2/2.</text>
</comment>
<comment type="subcellular location">
    <subcellularLocation>
        <location evidence="1">Cytoplasm</location>
    </subcellularLocation>
</comment>
<comment type="similarity">
    <text evidence="1">Belongs to the radical SAM superfamily. Lipoyl synthase family.</text>
</comment>
<accession>B9MQ24</accession>
<feature type="chain" id="PRO_1000124617" description="Lipoyl synthase">
    <location>
        <begin position="1"/>
        <end position="291"/>
    </location>
</feature>
<feature type="domain" description="Radical SAM core" evidence="2">
    <location>
        <begin position="48"/>
        <end position="264"/>
    </location>
</feature>
<feature type="binding site" evidence="1">
    <location>
        <position position="36"/>
    </location>
    <ligand>
        <name>[4Fe-4S] cluster</name>
        <dbReference type="ChEBI" id="CHEBI:49883"/>
        <label>1</label>
    </ligand>
</feature>
<feature type="binding site" evidence="1">
    <location>
        <position position="41"/>
    </location>
    <ligand>
        <name>[4Fe-4S] cluster</name>
        <dbReference type="ChEBI" id="CHEBI:49883"/>
        <label>1</label>
    </ligand>
</feature>
<feature type="binding site" evidence="1">
    <location>
        <position position="47"/>
    </location>
    <ligand>
        <name>[4Fe-4S] cluster</name>
        <dbReference type="ChEBI" id="CHEBI:49883"/>
        <label>1</label>
    </ligand>
</feature>
<feature type="binding site" evidence="1">
    <location>
        <position position="62"/>
    </location>
    <ligand>
        <name>[4Fe-4S] cluster</name>
        <dbReference type="ChEBI" id="CHEBI:49883"/>
        <label>2</label>
        <note>4Fe-4S-S-AdoMet</note>
    </ligand>
</feature>
<feature type="binding site" evidence="1">
    <location>
        <position position="66"/>
    </location>
    <ligand>
        <name>[4Fe-4S] cluster</name>
        <dbReference type="ChEBI" id="CHEBI:49883"/>
        <label>2</label>
        <note>4Fe-4S-S-AdoMet</note>
    </ligand>
</feature>
<feature type="binding site" evidence="1">
    <location>
        <position position="69"/>
    </location>
    <ligand>
        <name>[4Fe-4S] cluster</name>
        <dbReference type="ChEBI" id="CHEBI:49883"/>
        <label>2</label>
        <note>4Fe-4S-S-AdoMet</note>
    </ligand>
</feature>
<feature type="binding site" evidence="1">
    <location>
        <position position="275"/>
    </location>
    <ligand>
        <name>[4Fe-4S] cluster</name>
        <dbReference type="ChEBI" id="CHEBI:49883"/>
        <label>1</label>
    </ligand>
</feature>
<name>LIPA_CALBD</name>
<gene>
    <name evidence="1" type="primary">lipA</name>
    <name type="ordered locus">Athe_0701</name>
</gene>
<dbReference type="EC" id="2.8.1.8" evidence="1"/>
<dbReference type="EMBL" id="CP001393">
    <property type="protein sequence ID" value="ACM59816.1"/>
    <property type="molecule type" value="Genomic_DNA"/>
</dbReference>
<dbReference type="RefSeq" id="WP_015907258.1">
    <property type="nucleotide sequence ID" value="NC_012034.1"/>
</dbReference>
<dbReference type="SMR" id="B9MQ24"/>
<dbReference type="STRING" id="521460.Athe_0701"/>
<dbReference type="GeneID" id="31772053"/>
<dbReference type="KEGG" id="ate:Athe_0701"/>
<dbReference type="eggNOG" id="COG0320">
    <property type="taxonomic scope" value="Bacteria"/>
</dbReference>
<dbReference type="HOGENOM" id="CLU_033144_2_1_9"/>
<dbReference type="UniPathway" id="UPA00538">
    <property type="reaction ID" value="UER00593"/>
</dbReference>
<dbReference type="Proteomes" id="UP000007723">
    <property type="component" value="Chromosome"/>
</dbReference>
<dbReference type="GO" id="GO:0005737">
    <property type="term" value="C:cytoplasm"/>
    <property type="evidence" value="ECO:0007669"/>
    <property type="project" value="UniProtKB-SubCell"/>
</dbReference>
<dbReference type="GO" id="GO:0051539">
    <property type="term" value="F:4 iron, 4 sulfur cluster binding"/>
    <property type="evidence" value="ECO:0007669"/>
    <property type="project" value="UniProtKB-UniRule"/>
</dbReference>
<dbReference type="GO" id="GO:0016992">
    <property type="term" value="F:lipoate synthase activity"/>
    <property type="evidence" value="ECO:0007669"/>
    <property type="project" value="UniProtKB-UniRule"/>
</dbReference>
<dbReference type="GO" id="GO:0046872">
    <property type="term" value="F:metal ion binding"/>
    <property type="evidence" value="ECO:0007669"/>
    <property type="project" value="UniProtKB-KW"/>
</dbReference>
<dbReference type="CDD" id="cd01335">
    <property type="entry name" value="Radical_SAM"/>
    <property type="match status" value="1"/>
</dbReference>
<dbReference type="FunFam" id="3.20.20.70:FF:000040">
    <property type="entry name" value="Lipoyl synthase"/>
    <property type="match status" value="1"/>
</dbReference>
<dbReference type="Gene3D" id="3.20.20.70">
    <property type="entry name" value="Aldolase class I"/>
    <property type="match status" value="1"/>
</dbReference>
<dbReference type="HAMAP" id="MF_00206">
    <property type="entry name" value="Lipoyl_synth"/>
    <property type="match status" value="1"/>
</dbReference>
<dbReference type="InterPro" id="IPR013785">
    <property type="entry name" value="Aldolase_TIM"/>
</dbReference>
<dbReference type="InterPro" id="IPR006638">
    <property type="entry name" value="Elp3/MiaA/NifB-like_rSAM"/>
</dbReference>
<dbReference type="InterPro" id="IPR003698">
    <property type="entry name" value="Lipoyl_synth"/>
</dbReference>
<dbReference type="InterPro" id="IPR007197">
    <property type="entry name" value="rSAM"/>
</dbReference>
<dbReference type="NCBIfam" id="TIGR00510">
    <property type="entry name" value="lipA"/>
    <property type="match status" value="1"/>
</dbReference>
<dbReference type="NCBIfam" id="NF004019">
    <property type="entry name" value="PRK05481.1"/>
    <property type="match status" value="1"/>
</dbReference>
<dbReference type="NCBIfam" id="NF009544">
    <property type="entry name" value="PRK12928.1"/>
    <property type="match status" value="1"/>
</dbReference>
<dbReference type="PANTHER" id="PTHR10949">
    <property type="entry name" value="LIPOYL SYNTHASE"/>
    <property type="match status" value="1"/>
</dbReference>
<dbReference type="PANTHER" id="PTHR10949:SF0">
    <property type="entry name" value="LIPOYL SYNTHASE, MITOCHONDRIAL"/>
    <property type="match status" value="1"/>
</dbReference>
<dbReference type="Pfam" id="PF04055">
    <property type="entry name" value="Radical_SAM"/>
    <property type="match status" value="1"/>
</dbReference>
<dbReference type="PIRSF" id="PIRSF005963">
    <property type="entry name" value="Lipoyl_synth"/>
    <property type="match status" value="1"/>
</dbReference>
<dbReference type="SFLD" id="SFLDF00271">
    <property type="entry name" value="lipoyl_synthase"/>
    <property type="match status" value="1"/>
</dbReference>
<dbReference type="SFLD" id="SFLDS00029">
    <property type="entry name" value="Radical_SAM"/>
    <property type="match status" value="1"/>
</dbReference>
<dbReference type="SMART" id="SM00729">
    <property type="entry name" value="Elp3"/>
    <property type="match status" value="1"/>
</dbReference>
<dbReference type="SUPFAM" id="SSF102114">
    <property type="entry name" value="Radical SAM enzymes"/>
    <property type="match status" value="1"/>
</dbReference>
<dbReference type="PROSITE" id="PS51918">
    <property type="entry name" value="RADICAL_SAM"/>
    <property type="match status" value="1"/>
</dbReference>
<sequence length="291" mass="32828">MSYLKKPDWLKIRVKADQKIDDVIEILKMFSLHTVCEEAQCPNIYECFSKKTATFLIMGDVCTRNCTFCDVKKGKPVKLNSDEPKMVANAVGALGLKYVVITSVTRDDLPDGGASHFAECIRSIKGKRPYTKIEVLIPDFKGSFESVSKVVEASPDVVAHNIETIERLYPCVRPLASYKRSLDVLRMVKEIDKNIFTKSGIMVGLGETKDEVKKALEDLRNAECDFVTIGQYLSPSKNHHPVVEFVHPDVFEEYKEFAISIGFKFVMSGPLVRSSYMAENTKDIIENVRKI</sequence>
<keyword id="KW-0004">4Fe-4S</keyword>
<keyword id="KW-0963">Cytoplasm</keyword>
<keyword id="KW-0408">Iron</keyword>
<keyword id="KW-0411">Iron-sulfur</keyword>
<keyword id="KW-0479">Metal-binding</keyword>
<keyword id="KW-0949">S-adenosyl-L-methionine</keyword>
<keyword id="KW-0808">Transferase</keyword>
<proteinExistence type="inferred from homology"/>